<gene>
    <name type="primary">kdgK</name>
    <name type="ordered locus">BSU22110</name>
</gene>
<proteinExistence type="evidence at transcript level"/>
<comment type="function">
    <text evidence="1">Catalyzes the phosphorylation of 2-keto-3-deoxygluconate (KDG) to produce 2-keto-3-deoxy-6-phosphogluconate (KDPG).</text>
</comment>
<comment type="catalytic activity">
    <reaction>
        <text>2-dehydro-3-deoxy-D-gluconate + ATP = 2-dehydro-3-deoxy-6-phospho-D-gluconate + ADP + H(+)</text>
        <dbReference type="Rhea" id="RHEA:14797"/>
        <dbReference type="ChEBI" id="CHEBI:15378"/>
        <dbReference type="ChEBI" id="CHEBI:30616"/>
        <dbReference type="ChEBI" id="CHEBI:57569"/>
        <dbReference type="ChEBI" id="CHEBI:57990"/>
        <dbReference type="ChEBI" id="CHEBI:456216"/>
        <dbReference type="EC" id="2.7.1.45"/>
    </reaction>
</comment>
<comment type="pathway">
    <text>Carbohydrate acid metabolism; 2-dehydro-3-deoxy-D-gluconate degradation; D-glyceraldehyde 3-phosphate and pyruvate from 2-dehydro-3-deoxy-D-gluconate: step 1/2.</text>
</comment>
<comment type="induction">
    <text evidence="3">Induced by galacturonate and negatively regulated by the KdgR repressor. Is subject to catabolite repression by glucose involving the ccpA gene.</text>
</comment>
<comment type="similarity">
    <text evidence="4">Belongs to the carbohydrate kinase PfkB family.</text>
</comment>
<accession>P50845</accession>
<sequence length="324" mass="35036">MKLDAVTFGESMAMFYANEYGGLHEVSTFSKGLAGAESNVACGLARLGFRMGWMSKVGNDQLGTFILQELKKEGVDVSRVIRSQDENPTGLLLKSKVKEGDPQVTYYRKNSAASTLTTAEYPRDYFQCAGHLHVTGIPPALSAEMKDFTYHVMNDMRNAGKTISFDPNVRPSLWPDQATMVHTINDLAGLADWFFPGIAEGELLTGEKTPEGIADYYLKKGASFVAIKLGKEGAYFKTGTSEGFLEGCRVDRVVDTVGAGDGFAVGVISGILDGLSYKDAVQRGNAIGALQVQAPGDMDGLPTREKLASFLSAQRTVHQKKGDY</sequence>
<feature type="chain" id="PRO_0000080084" description="2-dehydro-3-deoxygluconokinase">
    <location>
        <begin position="1"/>
        <end position="324"/>
    </location>
</feature>
<feature type="active site" description="Proton acceptor" evidence="2">
    <location>
        <position position="261"/>
    </location>
</feature>
<feature type="binding site" evidence="2">
    <location>
        <begin position="35"/>
        <end position="39"/>
    </location>
    <ligand>
        <name>substrate</name>
    </ligand>
</feature>
<feature type="binding site" evidence="2">
    <location>
        <begin position="106"/>
        <end position="108"/>
    </location>
    <ligand>
        <name>substrate</name>
    </ligand>
</feature>
<feature type="binding site" evidence="2">
    <location>
        <begin position="168"/>
        <end position="170"/>
    </location>
    <ligand>
        <name>ATP</name>
        <dbReference type="ChEBI" id="CHEBI:30616"/>
    </ligand>
</feature>
<feature type="binding site" evidence="2">
    <location>
        <position position="170"/>
    </location>
    <ligand>
        <name>substrate</name>
    </ligand>
</feature>
<feature type="binding site" evidence="2">
    <location>
        <begin position="228"/>
        <end position="233"/>
    </location>
    <ligand>
        <name>ATP</name>
        <dbReference type="ChEBI" id="CHEBI:30616"/>
    </ligand>
</feature>
<feature type="binding site" evidence="2">
    <location>
        <begin position="258"/>
        <end position="261"/>
    </location>
    <ligand>
        <name>ATP</name>
        <dbReference type="ChEBI" id="CHEBI:30616"/>
    </ligand>
</feature>
<feature type="binding site" evidence="2">
    <location>
        <position position="261"/>
    </location>
    <ligand>
        <name>substrate</name>
    </ligand>
</feature>
<feature type="binding site" evidence="2">
    <location>
        <position position="297"/>
    </location>
    <ligand>
        <name>substrate</name>
    </ligand>
</feature>
<evidence type="ECO:0000250" key="1"/>
<evidence type="ECO:0000250" key="2">
    <source>
        <dbReference type="UniProtKB" id="Q97U29"/>
    </source>
</evidence>
<evidence type="ECO:0000269" key="3">
    <source>
    </source>
</evidence>
<evidence type="ECO:0000305" key="4"/>
<protein>
    <recommendedName>
        <fullName>2-dehydro-3-deoxygluconokinase</fullName>
        <ecNumber>2.7.1.45</ecNumber>
    </recommendedName>
    <alternativeName>
        <fullName>2-keto-3-deoxygluconokinase</fullName>
    </alternativeName>
    <alternativeName>
        <fullName>3-deoxy-2-oxo-D-gluconate kinase</fullName>
    </alternativeName>
    <alternativeName>
        <fullName>KDG kinase</fullName>
    </alternativeName>
</protein>
<name>KDGK_BACSU</name>
<dbReference type="EC" id="2.7.1.45"/>
<dbReference type="EMBL" id="L47838">
    <property type="protein sequence ID" value="AAB38479.1"/>
    <property type="molecule type" value="Genomic_DNA"/>
</dbReference>
<dbReference type="EMBL" id="AL009126">
    <property type="protein sequence ID" value="CAB14128.1"/>
    <property type="molecule type" value="Genomic_DNA"/>
</dbReference>
<dbReference type="PIR" id="A69648">
    <property type="entry name" value="A69648"/>
</dbReference>
<dbReference type="RefSeq" id="NP_390093.1">
    <property type="nucleotide sequence ID" value="NC_000964.3"/>
</dbReference>
<dbReference type="RefSeq" id="WP_003230727.1">
    <property type="nucleotide sequence ID" value="NZ_OZ025638.1"/>
</dbReference>
<dbReference type="SMR" id="P50845"/>
<dbReference type="FunCoup" id="P50845">
    <property type="interactions" value="128"/>
</dbReference>
<dbReference type="STRING" id="224308.BSU22110"/>
<dbReference type="PaxDb" id="224308-BSU22110"/>
<dbReference type="EnsemblBacteria" id="CAB14128">
    <property type="protein sequence ID" value="CAB14128"/>
    <property type="gene ID" value="BSU_22110"/>
</dbReference>
<dbReference type="GeneID" id="939058"/>
<dbReference type="KEGG" id="bsu:BSU22110"/>
<dbReference type="PATRIC" id="fig|224308.179.peg.2415"/>
<dbReference type="eggNOG" id="COG0524">
    <property type="taxonomic scope" value="Bacteria"/>
</dbReference>
<dbReference type="InParanoid" id="P50845"/>
<dbReference type="OrthoDB" id="9813569at2"/>
<dbReference type="PhylomeDB" id="P50845"/>
<dbReference type="BioCyc" id="BSUB:BSU22110-MONOMER"/>
<dbReference type="UniPathway" id="UPA00856">
    <property type="reaction ID" value="UER00828"/>
</dbReference>
<dbReference type="Proteomes" id="UP000001570">
    <property type="component" value="Chromosome"/>
</dbReference>
<dbReference type="GO" id="GO:0008673">
    <property type="term" value="F:2-dehydro-3-deoxygluconokinase activity"/>
    <property type="evidence" value="ECO:0007669"/>
    <property type="project" value="UniProtKB-EC"/>
</dbReference>
<dbReference type="GO" id="GO:0005524">
    <property type="term" value="F:ATP binding"/>
    <property type="evidence" value="ECO:0007669"/>
    <property type="project" value="UniProtKB-KW"/>
</dbReference>
<dbReference type="CDD" id="cd01166">
    <property type="entry name" value="KdgK"/>
    <property type="match status" value="1"/>
</dbReference>
<dbReference type="Gene3D" id="3.40.1190.20">
    <property type="match status" value="1"/>
</dbReference>
<dbReference type="InterPro" id="IPR052700">
    <property type="entry name" value="Carb_kinase_PfkB-like"/>
</dbReference>
<dbReference type="InterPro" id="IPR002173">
    <property type="entry name" value="Carboh/pur_kinase_PfkB_CS"/>
</dbReference>
<dbReference type="InterPro" id="IPR011611">
    <property type="entry name" value="PfkB_dom"/>
</dbReference>
<dbReference type="InterPro" id="IPR029056">
    <property type="entry name" value="Ribokinase-like"/>
</dbReference>
<dbReference type="PANTHER" id="PTHR43320:SF2">
    <property type="entry name" value="2-DEHYDRO-3-DEOXYGLUCONOKINASE_2-DEHYDRO-3-DEOXYGALACTONOKINASE"/>
    <property type="match status" value="1"/>
</dbReference>
<dbReference type="PANTHER" id="PTHR43320">
    <property type="entry name" value="SUGAR KINASE"/>
    <property type="match status" value="1"/>
</dbReference>
<dbReference type="Pfam" id="PF00294">
    <property type="entry name" value="PfkB"/>
    <property type="match status" value="1"/>
</dbReference>
<dbReference type="SUPFAM" id="SSF53613">
    <property type="entry name" value="Ribokinase-like"/>
    <property type="match status" value="1"/>
</dbReference>
<dbReference type="PROSITE" id="PS00584">
    <property type="entry name" value="PFKB_KINASES_2"/>
    <property type="match status" value="1"/>
</dbReference>
<reference key="1">
    <citation type="journal article" date="1996" name="Microbiology">
        <title>Sequence analysis of the Bacillus subtilis chromosome region between the serA and kdg loci cloned in a yeast artificial chromosome.</title>
        <authorList>
            <person name="Sorokin A.V."/>
            <person name="Azevedo V."/>
            <person name="Zumstein E."/>
            <person name="Galleron N."/>
            <person name="Ehrlich S.D."/>
            <person name="Serror P."/>
        </authorList>
    </citation>
    <scope>NUCLEOTIDE SEQUENCE [GENOMIC DNA]</scope>
    <source>
        <strain>168 / Marburg / ATCC 6051 / DSM 10 / JCM 1465 / NBRC 13719 / NCIMB 3610 / NRRL NRS-744 / VKM B-501</strain>
    </source>
</reference>
<reference key="2">
    <citation type="journal article" date="1997" name="Nature">
        <title>The complete genome sequence of the Gram-positive bacterium Bacillus subtilis.</title>
        <authorList>
            <person name="Kunst F."/>
            <person name="Ogasawara N."/>
            <person name="Moszer I."/>
            <person name="Albertini A.M."/>
            <person name="Alloni G."/>
            <person name="Azevedo V."/>
            <person name="Bertero M.G."/>
            <person name="Bessieres P."/>
            <person name="Bolotin A."/>
            <person name="Borchert S."/>
            <person name="Borriss R."/>
            <person name="Boursier L."/>
            <person name="Brans A."/>
            <person name="Braun M."/>
            <person name="Brignell S.C."/>
            <person name="Bron S."/>
            <person name="Brouillet S."/>
            <person name="Bruschi C.V."/>
            <person name="Caldwell B."/>
            <person name="Capuano V."/>
            <person name="Carter N.M."/>
            <person name="Choi S.-K."/>
            <person name="Codani J.-J."/>
            <person name="Connerton I.F."/>
            <person name="Cummings N.J."/>
            <person name="Daniel R.A."/>
            <person name="Denizot F."/>
            <person name="Devine K.M."/>
            <person name="Duesterhoeft A."/>
            <person name="Ehrlich S.D."/>
            <person name="Emmerson P.T."/>
            <person name="Entian K.-D."/>
            <person name="Errington J."/>
            <person name="Fabret C."/>
            <person name="Ferrari E."/>
            <person name="Foulger D."/>
            <person name="Fritz C."/>
            <person name="Fujita M."/>
            <person name="Fujita Y."/>
            <person name="Fuma S."/>
            <person name="Galizzi A."/>
            <person name="Galleron N."/>
            <person name="Ghim S.-Y."/>
            <person name="Glaser P."/>
            <person name="Goffeau A."/>
            <person name="Golightly E.J."/>
            <person name="Grandi G."/>
            <person name="Guiseppi G."/>
            <person name="Guy B.J."/>
            <person name="Haga K."/>
            <person name="Haiech J."/>
            <person name="Harwood C.R."/>
            <person name="Henaut A."/>
            <person name="Hilbert H."/>
            <person name="Holsappel S."/>
            <person name="Hosono S."/>
            <person name="Hullo M.-F."/>
            <person name="Itaya M."/>
            <person name="Jones L.-M."/>
            <person name="Joris B."/>
            <person name="Karamata D."/>
            <person name="Kasahara Y."/>
            <person name="Klaerr-Blanchard M."/>
            <person name="Klein C."/>
            <person name="Kobayashi Y."/>
            <person name="Koetter P."/>
            <person name="Koningstein G."/>
            <person name="Krogh S."/>
            <person name="Kumano M."/>
            <person name="Kurita K."/>
            <person name="Lapidus A."/>
            <person name="Lardinois S."/>
            <person name="Lauber J."/>
            <person name="Lazarevic V."/>
            <person name="Lee S.-M."/>
            <person name="Levine A."/>
            <person name="Liu H."/>
            <person name="Masuda S."/>
            <person name="Mauel C."/>
            <person name="Medigue C."/>
            <person name="Medina N."/>
            <person name="Mellado R.P."/>
            <person name="Mizuno M."/>
            <person name="Moestl D."/>
            <person name="Nakai S."/>
            <person name="Noback M."/>
            <person name="Noone D."/>
            <person name="O'Reilly M."/>
            <person name="Ogawa K."/>
            <person name="Ogiwara A."/>
            <person name="Oudega B."/>
            <person name="Park S.-H."/>
            <person name="Parro V."/>
            <person name="Pohl T.M."/>
            <person name="Portetelle D."/>
            <person name="Porwollik S."/>
            <person name="Prescott A.M."/>
            <person name="Presecan E."/>
            <person name="Pujic P."/>
            <person name="Purnelle B."/>
            <person name="Rapoport G."/>
            <person name="Rey M."/>
            <person name="Reynolds S."/>
            <person name="Rieger M."/>
            <person name="Rivolta C."/>
            <person name="Rocha E."/>
            <person name="Roche B."/>
            <person name="Rose M."/>
            <person name="Sadaie Y."/>
            <person name="Sato T."/>
            <person name="Scanlan E."/>
            <person name="Schleich S."/>
            <person name="Schroeter R."/>
            <person name="Scoffone F."/>
            <person name="Sekiguchi J."/>
            <person name="Sekowska A."/>
            <person name="Seror S.J."/>
            <person name="Serror P."/>
            <person name="Shin B.-S."/>
            <person name="Soldo B."/>
            <person name="Sorokin A."/>
            <person name="Tacconi E."/>
            <person name="Takagi T."/>
            <person name="Takahashi H."/>
            <person name="Takemaru K."/>
            <person name="Takeuchi M."/>
            <person name="Tamakoshi A."/>
            <person name="Tanaka T."/>
            <person name="Terpstra P."/>
            <person name="Tognoni A."/>
            <person name="Tosato V."/>
            <person name="Uchiyama S."/>
            <person name="Vandenbol M."/>
            <person name="Vannier F."/>
            <person name="Vassarotti A."/>
            <person name="Viari A."/>
            <person name="Wambutt R."/>
            <person name="Wedler E."/>
            <person name="Wedler H."/>
            <person name="Weitzenegger T."/>
            <person name="Winters P."/>
            <person name="Wipat A."/>
            <person name="Yamamoto H."/>
            <person name="Yamane K."/>
            <person name="Yasumoto K."/>
            <person name="Yata K."/>
            <person name="Yoshida K."/>
            <person name="Yoshikawa H.-F."/>
            <person name="Zumstein E."/>
            <person name="Yoshikawa H."/>
            <person name="Danchin A."/>
        </authorList>
    </citation>
    <scope>NUCLEOTIDE SEQUENCE [LARGE SCALE GENOMIC DNA]</scope>
    <source>
        <strain>168</strain>
    </source>
</reference>
<reference key="3">
    <citation type="journal article" date="1998" name="Microbiology">
        <title>The kdgRKAT operon of Bacillus subtilis: detection of the transcript and regulation by the kdgR and ccpA genes.</title>
        <authorList>
            <person name="Pujic P."/>
            <person name="Dervyn R."/>
            <person name="Sorokin A."/>
            <person name="Ehrlich S.D."/>
        </authorList>
    </citation>
    <scope>INDUCTION</scope>
    <source>
        <strain>168</strain>
    </source>
</reference>
<organism>
    <name type="scientific">Bacillus subtilis (strain 168)</name>
    <dbReference type="NCBI Taxonomy" id="224308"/>
    <lineage>
        <taxon>Bacteria</taxon>
        <taxon>Bacillati</taxon>
        <taxon>Bacillota</taxon>
        <taxon>Bacilli</taxon>
        <taxon>Bacillales</taxon>
        <taxon>Bacillaceae</taxon>
        <taxon>Bacillus</taxon>
    </lineage>
</organism>
<keyword id="KW-0067">ATP-binding</keyword>
<keyword id="KW-0119">Carbohydrate metabolism</keyword>
<keyword id="KW-0418">Kinase</keyword>
<keyword id="KW-0547">Nucleotide-binding</keyword>
<keyword id="KW-1185">Reference proteome</keyword>
<keyword id="KW-0808">Transferase</keyword>